<comment type="function">
    <text evidence="1">DNA-dependent RNA polymerase catalyzes the transcription of DNA into RNA using the four ribonucleoside triphosphates as substrates.</text>
</comment>
<comment type="catalytic activity">
    <reaction evidence="1">
        <text>RNA(n) + a ribonucleoside 5'-triphosphate = RNA(n+1) + diphosphate</text>
        <dbReference type="Rhea" id="RHEA:21248"/>
        <dbReference type="Rhea" id="RHEA-COMP:14527"/>
        <dbReference type="Rhea" id="RHEA-COMP:17342"/>
        <dbReference type="ChEBI" id="CHEBI:33019"/>
        <dbReference type="ChEBI" id="CHEBI:61557"/>
        <dbReference type="ChEBI" id="CHEBI:140395"/>
        <dbReference type="EC" id="2.7.7.6"/>
    </reaction>
</comment>
<comment type="subunit">
    <text evidence="1">Homodimer. The RNAP catalytic core consists of 2 alpha, 1 beta, 1 beta' and 1 omega subunit. When a sigma factor is associated with the core the holoenzyme is formed, which can initiate transcription.</text>
</comment>
<comment type="domain">
    <text evidence="1">The N-terminal domain is essential for RNAP assembly and basal transcription, whereas the C-terminal domain is involved in interaction with transcriptional regulators and with upstream promoter elements.</text>
</comment>
<comment type="similarity">
    <text evidence="1">Belongs to the RNA polymerase alpha chain family.</text>
</comment>
<sequence length="329" mass="36173">MQEMLEQLLTPRLVDIKTVNGFNSRVTLEPLERGFGHTLGNALRRILLSSMPGAAIVEAQIDGVLHEYSAIEGVREDVLEIMLNLKEVAIKLNETSEAELTLSKKGPAVVTAADIQLNHDTEIMNPDLVIAHLGEGAELSMKLKVEKGIGYRAAVQSSDSESANIGVLKLDASFSPVKTVSYEVQNARVEQRTDLDKLILNVVTDGTLDPEDAIKQAATVLHYQLIAFVDLKHKEIVVQEEEENEFDPIFLQPVDDLELTVRSANCLKAEQIYYIGDLVQRAESSLLKTPNLGKKSLQEIKDVLAQRGLGLGTKLENWPPSSLVSKESA</sequence>
<name>RPOA_HYDCU</name>
<protein>
    <recommendedName>
        <fullName evidence="1">DNA-directed RNA polymerase subunit alpha</fullName>
        <shortName evidence="1">RNAP subunit alpha</shortName>
        <ecNumber evidence="1">2.7.7.6</ecNumber>
    </recommendedName>
    <alternativeName>
        <fullName evidence="1">RNA polymerase subunit alpha</fullName>
    </alternativeName>
    <alternativeName>
        <fullName evidence="1">Transcriptase subunit alpha</fullName>
    </alternativeName>
</protein>
<keyword id="KW-0240">DNA-directed RNA polymerase</keyword>
<keyword id="KW-0548">Nucleotidyltransferase</keyword>
<keyword id="KW-0804">Transcription</keyword>
<keyword id="KW-0808">Transferase</keyword>
<dbReference type="EC" id="2.7.7.6" evidence="1"/>
<dbReference type="EMBL" id="CP000109">
    <property type="protein sequence ID" value="ABB40915.1"/>
    <property type="molecule type" value="Genomic_DNA"/>
</dbReference>
<dbReference type="SMR" id="Q31IV8"/>
<dbReference type="STRING" id="317025.Tcr_0319"/>
<dbReference type="KEGG" id="tcx:Tcr_0319"/>
<dbReference type="eggNOG" id="COG0202">
    <property type="taxonomic scope" value="Bacteria"/>
</dbReference>
<dbReference type="HOGENOM" id="CLU_053084_0_0_6"/>
<dbReference type="OrthoDB" id="9805706at2"/>
<dbReference type="GO" id="GO:0005737">
    <property type="term" value="C:cytoplasm"/>
    <property type="evidence" value="ECO:0007669"/>
    <property type="project" value="UniProtKB-ARBA"/>
</dbReference>
<dbReference type="GO" id="GO:0000428">
    <property type="term" value="C:DNA-directed RNA polymerase complex"/>
    <property type="evidence" value="ECO:0007669"/>
    <property type="project" value="UniProtKB-KW"/>
</dbReference>
<dbReference type="GO" id="GO:0003677">
    <property type="term" value="F:DNA binding"/>
    <property type="evidence" value="ECO:0007669"/>
    <property type="project" value="UniProtKB-UniRule"/>
</dbReference>
<dbReference type="GO" id="GO:0003899">
    <property type="term" value="F:DNA-directed RNA polymerase activity"/>
    <property type="evidence" value="ECO:0007669"/>
    <property type="project" value="UniProtKB-UniRule"/>
</dbReference>
<dbReference type="GO" id="GO:0046983">
    <property type="term" value="F:protein dimerization activity"/>
    <property type="evidence" value="ECO:0007669"/>
    <property type="project" value="InterPro"/>
</dbReference>
<dbReference type="GO" id="GO:0006351">
    <property type="term" value="P:DNA-templated transcription"/>
    <property type="evidence" value="ECO:0007669"/>
    <property type="project" value="UniProtKB-UniRule"/>
</dbReference>
<dbReference type="CDD" id="cd06928">
    <property type="entry name" value="RNAP_alpha_NTD"/>
    <property type="match status" value="1"/>
</dbReference>
<dbReference type="FunFam" id="1.10.150.20:FF:000001">
    <property type="entry name" value="DNA-directed RNA polymerase subunit alpha"/>
    <property type="match status" value="1"/>
</dbReference>
<dbReference type="FunFam" id="2.170.120.12:FF:000001">
    <property type="entry name" value="DNA-directed RNA polymerase subunit alpha"/>
    <property type="match status" value="1"/>
</dbReference>
<dbReference type="Gene3D" id="1.10.150.20">
    <property type="entry name" value="5' to 3' exonuclease, C-terminal subdomain"/>
    <property type="match status" value="1"/>
</dbReference>
<dbReference type="Gene3D" id="2.170.120.12">
    <property type="entry name" value="DNA-directed RNA polymerase, insert domain"/>
    <property type="match status" value="1"/>
</dbReference>
<dbReference type="Gene3D" id="3.30.1360.10">
    <property type="entry name" value="RNA polymerase, RBP11-like subunit"/>
    <property type="match status" value="1"/>
</dbReference>
<dbReference type="HAMAP" id="MF_00059">
    <property type="entry name" value="RNApol_bact_RpoA"/>
    <property type="match status" value="1"/>
</dbReference>
<dbReference type="InterPro" id="IPR011262">
    <property type="entry name" value="DNA-dir_RNA_pol_insert"/>
</dbReference>
<dbReference type="InterPro" id="IPR011263">
    <property type="entry name" value="DNA-dir_RNA_pol_RpoA/D/Rpb3"/>
</dbReference>
<dbReference type="InterPro" id="IPR011773">
    <property type="entry name" value="DNA-dir_RpoA"/>
</dbReference>
<dbReference type="InterPro" id="IPR036603">
    <property type="entry name" value="RBP11-like"/>
</dbReference>
<dbReference type="InterPro" id="IPR011260">
    <property type="entry name" value="RNAP_asu_C"/>
</dbReference>
<dbReference type="InterPro" id="IPR036643">
    <property type="entry name" value="RNApol_insert_sf"/>
</dbReference>
<dbReference type="NCBIfam" id="NF003513">
    <property type="entry name" value="PRK05182.1-2"/>
    <property type="match status" value="1"/>
</dbReference>
<dbReference type="NCBIfam" id="NF003519">
    <property type="entry name" value="PRK05182.2-5"/>
    <property type="match status" value="1"/>
</dbReference>
<dbReference type="NCBIfam" id="TIGR02027">
    <property type="entry name" value="rpoA"/>
    <property type="match status" value="1"/>
</dbReference>
<dbReference type="Pfam" id="PF01000">
    <property type="entry name" value="RNA_pol_A_bac"/>
    <property type="match status" value="1"/>
</dbReference>
<dbReference type="Pfam" id="PF03118">
    <property type="entry name" value="RNA_pol_A_CTD"/>
    <property type="match status" value="1"/>
</dbReference>
<dbReference type="Pfam" id="PF01193">
    <property type="entry name" value="RNA_pol_L"/>
    <property type="match status" value="1"/>
</dbReference>
<dbReference type="SMART" id="SM00662">
    <property type="entry name" value="RPOLD"/>
    <property type="match status" value="1"/>
</dbReference>
<dbReference type="SUPFAM" id="SSF47789">
    <property type="entry name" value="C-terminal domain of RNA polymerase alpha subunit"/>
    <property type="match status" value="1"/>
</dbReference>
<dbReference type="SUPFAM" id="SSF56553">
    <property type="entry name" value="Insert subdomain of RNA polymerase alpha subunit"/>
    <property type="match status" value="1"/>
</dbReference>
<dbReference type="SUPFAM" id="SSF55257">
    <property type="entry name" value="RBP11-like subunits of RNA polymerase"/>
    <property type="match status" value="1"/>
</dbReference>
<reference key="1">
    <citation type="journal article" date="2006" name="PLoS Biol.">
        <title>The genome of deep-sea vent chemolithoautotroph Thiomicrospira crunogena XCL-2.</title>
        <authorList>
            <person name="Scott K.M."/>
            <person name="Sievert S.M."/>
            <person name="Abril F.N."/>
            <person name="Ball L.A."/>
            <person name="Barrett C.J."/>
            <person name="Blake R.A."/>
            <person name="Boller A.J."/>
            <person name="Chain P.S.G."/>
            <person name="Clark J.A."/>
            <person name="Davis C.R."/>
            <person name="Detter C."/>
            <person name="Do K.F."/>
            <person name="Dobrinski K.P."/>
            <person name="Faza B.I."/>
            <person name="Fitzpatrick K.A."/>
            <person name="Freyermuth S.K."/>
            <person name="Harmer T.L."/>
            <person name="Hauser L.J."/>
            <person name="Huegler M."/>
            <person name="Kerfeld C.A."/>
            <person name="Klotz M.G."/>
            <person name="Kong W.W."/>
            <person name="Land M."/>
            <person name="Lapidus A."/>
            <person name="Larimer F.W."/>
            <person name="Longo D.L."/>
            <person name="Lucas S."/>
            <person name="Malfatti S.A."/>
            <person name="Massey S.E."/>
            <person name="Martin D.D."/>
            <person name="McCuddin Z."/>
            <person name="Meyer F."/>
            <person name="Moore J.L."/>
            <person name="Ocampo L.H. Jr."/>
            <person name="Paul J.H."/>
            <person name="Paulsen I.T."/>
            <person name="Reep D.K."/>
            <person name="Ren Q."/>
            <person name="Ross R.L."/>
            <person name="Sato P.Y."/>
            <person name="Thomas P."/>
            <person name="Tinkham L.E."/>
            <person name="Zeruth G.T."/>
        </authorList>
    </citation>
    <scope>NUCLEOTIDE SEQUENCE [LARGE SCALE GENOMIC DNA]</scope>
    <source>
        <strain>DSM 25203 / XCL-2</strain>
    </source>
</reference>
<evidence type="ECO:0000255" key="1">
    <source>
        <dbReference type="HAMAP-Rule" id="MF_00059"/>
    </source>
</evidence>
<gene>
    <name evidence="1" type="primary">rpoA</name>
    <name type="ordered locus">Tcr_0319</name>
</gene>
<accession>Q31IV8</accession>
<proteinExistence type="inferred from homology"/>
<organism>
    <name type="scientific">Hydrogenovibrio crunogenus (strain DSM 25203 / XCL-2)</name>
    <name type="common">Thiomicrospira crunogena</name>
    <dbReference type="NCBI Taxonomy" id="317025"/>
    <lineage>
        <taxon>Bacteria</taxon>
        <taxon>Pseudomonadati</taxon>
        <taxon>Pseudomonadota</taxon>
        <taxon>Gammaproteobacteria</taxon>
        <taxon>Thiotrichales</taxon>
        <taxon>Piscirickettsiaceae</taxon>
        <taxon>Hydrogenovibrio</taxon>
    </lineage>
</organism>
<feature type="chain" id="PRO_0000264565" description="DNA-directed RNA polymerase subunit alpha">
    <location>
        <begin position="1"/>
        <end position="329"/>
    </location>
</feature>
<feature type="region of interest" description="Alpha N-terminal domain (alpha-NTD)" evidence="1">
    <location>
        <begin position="1"/>
        <end position="232"/>
    </location>
</feature>
<feature type="region of interest" description="Alpha C-terminal domain (alpha-CTD)" evidence="1">
    <location>
        <begin position="246"/>
        <end position="329"/>
    </location>
</feature>